<organism>
    <name type="scientific">Kluyveromyces lactis (strain ATCC 8585 / CBS 2359 / DSM 70799 / NBRC 1267 / NRRL Y-1140 / WM37)</name>
    <name type="common">Yeast</name>
    <name type="synonym">Candida sphaerica</name>
    <dbReference type="NCBI Taxonomy" id="284590"/>
    <lineage>
        <taxon>Eukaryota</taxon>
        <taxon>Fungi</taxon>
        <taxon>Dikarya</taxon>
        <taxon>Ascomycota</taxon>
        <taxon>Saccharomycotina</taxon>
        <taxon>Saccharomycetes</taxon>
        <taxon>Saccharomycetales</taxon>
        <taxon>Saccharomycetaceae</taxon>
        <taxon>Kluyveromyces</taxon>
    </lineage>
</organism>
<keyword id="KW-0067">ATP-binding</keyword>
<keyword id="KW-0175">Coiled coil</keyword>
<keyword id="KW-0963">Cytoplasm</keyword>
<keyword id="KW-0479">Metal-binding</keyword>
<keyword id="KW-0507">mRNA processing</keyword>
<keyword id="KW-0547">Nucleotide-binding</keyword>
<keyword id="KW-1185">Reference proteome</keyword>
<keyword id="KW-0862">Zinc</keyword>
<keyword id="KW-0863">Zinc-finger</keyword>
<evidence type="ECO:0000255" key="1">
    <source>
        <dbReference type="HAMAP-Rule" id="MF_03181"/>
    </source>
</evidence>
<evidence type="ECO:0000256" key="2">
    <source>
        <dbReference type="SAM" id="MobiDB-lite"/>
    </source>
</evidence>
<evidence type="ECO:0000305" key="3"/>
<proteinExistence type="inferred from homology"/>
<feature type="chain" id="PRO_0000295369" description="PAN2-PAN3 deadenylation complex subunit PAN3">
    <location>
        <begin position="1"/>
        <end position="656"/>
    </location>
</feature>
<feature type="zinc finger region" description="C3H1-type" evidence="1">
    <location>
        <begin position="15"/>
        <end position="44"/>
    </location>
</feature>
<feature type="region of interest" description="Disordered" evidence="2">
    <location>
        <begin position="71"/>
        <end position="104"/>
    </location>
</feature>
<feature type="region of interest" description="Pseudokinase domain" evidence="1">
    <location>
        <begin position="271"/>
        <end position="525"/>
    </location>
</feature>
<feature type="region of interest" description="Knob domain" evidence="1">
    <location>
        <begin position="565"/>
        <end position="656"/>
    </location>
</feature>
<feature type="coiled-coil region" evidence="1">
    <location>
        <begin position="526"/>
        <end position="564"/>
    </location>
</feature>
<feature type="short sequence motif" description="PABPC-interacting motif-2 (PAM-2)" evidence="3">
    <location>
        <begin position="128"/>
        <end position="148"/>
    </location>
</feature>
<feature type="binding site" evidence="1">
    <location>
        <position position="325"/>
    </location>
    <ligand>
        <name>ATP</name>
        <dbReference type="ChEBI" id="CHEBI:30616"/>
    </ligand>
</feature>
<feature type="binding site" evidence="1">
    <location>
        <begin position="375"/>
        <end position="382"/>
    </location>
    <ligand>
        <name>ATP</name>
        <dbReference type="ChEBI" id="CHEBI:30616"/>
    </ligand>
</feature>
<feature type="binding site" evidence="1">
    <location>
        <begin position="428"/>
        <end position="429"/>
    </location>
    <ligand>
        <name>ATP</name>
        <dbReference type="ChEBI" id="CHEBI:30616"/>
    </ligand>
</feature>
<dbReference type="EMBL" id="CR382125">
    <property type="protein sequence ID" value="CAG99403.1"/>
    <property type="molecule type" value="Genomic_DNA"/>
</dbReference>
<dbReference type="RefSeq" id="XP_454316.1">
    <property type="nucleotide sequence ID" value="XM_454316.1"/>
</dbReference>
<dbReference type="SMR" id="Q6CP23"/>
<dbReference type="FunCoup" id="Q6CP23">
    <property type="interactions" value="682"/>
</dbReference>
<dbReference type="STRING" id="284590.Q6CP23"/>
<dbReference type="PaxDb" id="284590-Q6CP23"/>
<dbReference type="KEGG" id="kla:KLLA0_E08097g"/>
<dbReference type="eggNOG" id="KOG3741">
    <property type="taxonomic scope" value="Eukaryota"/>
</dbReference>
<dbReference type="HOGENOM" id="CLU_016423_2_1_1"/>
<dbReference type="InParanoid" id="Q6CP23"/>
<dbReference type="OMA" id="YVFHSVD"/>
<dbReference type="Proteomes" id="UP000000598">
    <property type="component" value="Chromosome E"/>
</dbReference>
<dbReference type="GO" id="GO:0000932">
    <property type="term" value="C:P-body"/>
    <property type="evidence" value="ECO:0007669"/>
    <property type="project" value="TreeGrafter"/>
</dbReference>
<dbReference type="GO" id="GO:0031251">
    <property type="term" value="C:PAN complex"/>
    <property type="evidence" value="ECO:0007669"/>
    <property type="project" value="UniProtKB-UniRule"/>
</dbReference>
<dbReference type="GO" id="GO:0005524">
    <property type="term" value="F:ATP binding"/>
    <property type="evidence" value="ECO:0007669"/>
    <property type="project" value="UniProtKB-UniRule"/>
</dbReference>
<dbReference type="GO" id="GO:0008143">
    <property type="term" value="F:poly(A) binding"/>
    <property type="evidence" value="ECO:0007669"/>
    <property type="project" value="TreeGrafter"/>
</dbReference>
<dbReference type="GO" id="GO:0004672">
    <property type="term" value="F:protein kinase activity"/>
    <property type="evidence" value="ECO:0007669"/>
    <property type="project" value="InterPro"/>
</dbReference>
<dbReference type="GO" id="GO:0008270">
    <property type="term" value="F:zinc ion binding"/>
    <property type="evidence" value="ECO:0007669"/>
    <property type="project" value="UniProtKB-KW"/>
</dbReference>
<dbReference type="GO" id="GO:0006397">
    <property type="term" value="P:mRNA processing"/>
    <property type="evidence" value="ECO:0007669"/>
    <property type="project" value="UniProtKB-KW"/>
</dbReference>
<dbReference type="GO" id="GO:0000289">
    <property type="term" value="P:nuclear-transcribed mRNA poly(A) tail shortening"/>
    <property type="evidence" value="ECO:0007669"/>
    <property type="project" value="UniProtKB-UniRule"/>
</dbReference>
<dbReference type="FunFam" id="1.10.287.3700:FF:000002">
    <property type="entry name" value="PAN2-PAN3 deadenylation complex subunit PAN3"/>
    <property type="match status" value="1"/>
</dbReference>
<dbReference type="Gene3D" id="1.10.287.3700">
    <property type="match status" value="1"/>
</dbReference>
<dbReference type="Gene3D" id="1.20.5.5160">
    <property type="match status" value="1"/>
</dbReference>
<dbReference type="Gene3D" id="6.10.250.3160">
    <property type="match status" value="1"/>
</dbReference>
<dbReference type="Gene3D" id="1.10.510.10">
    <property type="entry name" value="Transferase(Phosphotransferase) domain 1"/>
    <property type="match status" value="1"/>
</dbReference>
<dbReference type="HAMAP" id="MF_03181">
    <property type="entry name" value="PAN3"/>
    <property type="match status" value="1"/>
</dbReference>
<dbReference type="InterPro" id="IPR011009">
    <property type="entry name" value="Kinase-like_dom_sf"/>
</dbReference>
<dbReference type="InterPro" id="IPR030844">
    <property type="entry name" value="PAN3"/>
</dbReference>
<dbReference type="InterPro" id="IPR041332">
    <property type="entry name" value="Pan3_PK"/>
</dbReference>
<dbReference type="InterPro" id="IPR000719">
    <property type="entry name" value="Prot_kinase_dom"/>
</dbReference>
<dbReference type="InterPro" id="IPR000571">
    <property type="entry name" value="Znf_CCCH"/>
</dbReference>
<dbReference type="PANTHER" id="PTHR12272">
    <property type="entry name" value="DEADENYLATION COMPLEX SUBUNIT PAN3"/>
    <property type="match status" value="1"/>
</dbReference>
<dbReference type="PANTHER" id="PTHR12272:SF11">
    <property type="entry name" value="PAN2-PAN3 DEADENYLATION COMPLEX SUBUNIT PAN3"/>
    <property type="match status" value="1"/>
</dbReference>
<dbReference type="Pfam" id="PF18101">
    <property type="entry name" value="Pan3_PK"/>
    <property type="match status" value="1"/>
</dbReference>
<dbReference type="SUPFAM" id="SSF56112">
    <property type="entry name" value="Protein kinase-like (PK-like)"/>
    <property type="match status" value="1"/>
</dbReference>
<dbReference type="PROSITE" id="PS50011">
    <property type="entry name" value="PROTEIN_KINASE_DOM"/>
    <property type="match status" value="1"/>
</dbReference>
<dbReference type="PROSITE" id="PS50103">
    <property type="entry name" value="ZF_C3H1"/>
    <property type="match status" value="1"/>
</dbReference>
<protein>
    <recommendedName>
        <fullName evidence="1">PAN2-PAN3 deadenylation complex subunit PAN3</fullName>
    </recommendedName>
    <alternativeName>
        <fullName evidence="1">PAB1P-dependent poly(A)-specific ribonuclease</fullName>
    </alternativeName>
    <alternativeName>
        <fullName evidence="1">Poly(A)-nuclease deadenylation complex subunit 3</fullName>
        <shortName evidence="1">PAN deadenylation complex subunit 3</shortName>
    </alternativeName>
</protein>
<name>PAN3_KLULA</name>
<sequence length="656" mass="73340">MISSASGTNWNRPDSFKGTQCRNIIIHGYCKFENEGCQFNHGNSKETEGQTTDEVPTQRSMTPLNVKFNAKTSSSFTPGKSPAVRSPDFSSLPAFQPGAPVNDQPMLADGPQISGTMSPSLMNSNATAFAPSFNPYASESFTPSVSAGGIPSSQELAGTLHGSNPSIPSPVPSNPYVNSAGLPSGGMLGVGHPMQGLPPPPPPGALPVNPITQFPTVYPPTHSVLQYHLYAPDPPPHLKIPLKPNERTPETLFINNHLRDRLVKNNQTALQVFPRGSLPDIVGDYFGLVPMDFHNRTSDKKRYNGHKNSLYKVFSNLDGKIYFMRRIHDVKITDSAQVSKPFQTWSHLRSANITVLKDSFVTSAFNDSSLCMVFDYYPQSQSLYETYGLANSVNELNQEYLWAFLVQLTIALQEVHSNGLALNDLDWKKVIVTGEPGRIKVTDIGVYDTLNYHQEGRMLHTEQQQNYLSLAELLLNLVQRLCGASGPLDDVKSYHIDPLFKKCIQYLQDTSNNNKNIEDFTKLFSHKVLSVVNSLQYNSEYLEQQLSRELENARLFRLMCKLNAIYGRLESRIDINWAESGEKFPIILFFDYVFHQKDDTGKNVMDLTHVLRCLNKLDAGVSERLMLVTPDEMNCIIISYKELKDLIDSTFRALTQ</sequence>
<reference key="1">
    <citation type="journal article" date="2004" name="Nature">
        <title>Genome evolution in yeasts.</title>
        <authorList>
            <person name="Dujon B."/>
            <person name="Sherman D."/>
            <person name="Fischer G."/>
            <person name="Durrens P."/>
            <person name="Casaregola S."/>
            <person name="Lafontaine I."/>
            <person name="de Montigny J."/>
            <person name="Marck C."/>
            <person name="Neuveglise C."/>
            <person name="Talla E."/>
            <person name="Goffard N."/>
            <person name="Frangeul L."/>
            <person name="Aigle M."/>
            <person name="Anthouard V."/>
            <person name="Babour A."/>
            <person name="Barbe V."/>
            <person name="Barnay S."/>
            <person name="Blanchin S."/>
            <person name="Beckerich J.-M."/>
            <person name="Beyne E."/>
            <person name="Bleykasten C."/>
            <person name="Boisrame A."/>
            <person name="Boyer J."/>
            <person name="Cattolico L."/>
            <person name="Confanioleri F."/>
            <person name="de Daruvar A."/>
            <person name="Despons L."/>
            <person name="Fabre E."/>
            <person name="Fairhead C."/>
            <person name="Ferry-Dumazet H."/>
            <person name="Groppi A."/>
            <person name="Hantraye F."/>
            <person name="Hennequin C."/>
            <person name="Jauniaux N."/>
            <person name="Joyet P."/>
            <person name="Kachouri R."/>
            <person name="Kerrest A."/>
            <person name="Koszul R."/>
            <person name="Lemaire M."/>
            <person name="Lesur I."/>
            <person name="Ma L."/>
            <person name="Muller H."/>
            <person name="Nicaud J.-M."/>
            <person name="Nikolski M."/>
            <person name="Oztas S."/>
            <person name="Ozier-Kalogeropoulos O."/>
            <person name="Pellenz S."/>
            <person name="Potier S."/>
            <person name="Richard G.-F."/>
            <person name="Straub M.-L."/>
            <person name="Suleau A."/>
            <person name="Swennen D."/>
            <person name="Tekaia F."/>
            <person name="Wesolowski-Louvel M."/>
            <person name="Westhof E."/>
            <person name="Wirth B."/>
            <person name="Zeniou-Meyer M."/>
            <person name="Zivanovic Y."/>
            <person name="Bolotin-Fukuhara M."/>
            <person name="Thierry A."/>
            <person name="Bouchier C."/>
            <person name="Caudron B."/>
            <person name="Scarpelli C."/>
            <person name="Gaillardin C."/>
            <person name="Weissenbach J."/>
            <person name="Wincker P."/>
            <person name="Souciet J.-L."/>
        </authorList>
    </citation>
    <scope>NUCLEOTIDE SEQUENCE [LARGE SCALE GENOMIC DNA]</scope>
    <source>
        <strain>ATCC 8585 / CBS 2359 / DSM 70799 / NBRC 1267 / NRRL Y-1140 / WM37</strain>
    </source>
</reference>
<gene>
    <name evidence="1" type="primary">PAN3</name>
    <name type="ordered locus">KLLA0E08085g</name>
</gene>
<comment type="function">
    <text evidence="1">Regulatory subunit of the poly(A)-nuclease (PAN) deadenylation complex, one of two cytoplasmic mRNA deadenylases involved in mRNA turnover. PAN specifically shortens poly(A) tails of RNA and the activity is stimulated by poly(A)-binding protein PAB1. PAN deadenylation is followed by rapid degradation of the shortened mRNA tails by the CCR4-NOT complex. Deadenylated mRNAs are then degraded by two alternative mechanisms, namely exosome-mediated 3'-5' exonucleolytic degradation, or deadenylation-dependent mRNA decaping and subsequent 5'-3' exonucleolytic degradation by XRN1. May also be involved in post-transcriptional maturation of mRNA poly(A) tails. PAN3 acts as a positive regulator for PAN activity, recruiting the catalytic subunit PAN2 to mRNA via its interaction with RNA and with PAB1.</text>
</comment>
<comment type="subunit">
    <text evidence="1">Homodimer. Forms a heterotrimer with a catalytic subunit PAN2 to form the poly(A)-nuclease (PAN) deadenylation complex. Interacts (via PAM-2 motif) with poly(A)-binding protein PAB1 (via PABC domain), conferring substrate specificity of the enzyme complex.</text>
</comment>
<comment type="subcellular location">
    <subcellularLocation>
        <location evidence="1">Cytoplasm</location>
    </subcellularLocation>
</comment>
<comment type="domain">
    <text evidence="1">The N-terminal zinc finger binds to poly(A) RNA.</text>
</comment>
<comment type="domain">
    <text evidence="1">Contains a pseudokinase domain. The protein kinase domain is predicted to be catalytically inactive because some of the residues important for catalytic activity are substituted and it lacks the equivalent of the binding site for a peptide substrate. However, it has retained an ATP-binding site and ATP-binding is required for mRNA degradation, stimulating the activity of the PAN2 nuclease in vitro. The nucleotide-binding site is juxtaposed to the RNase active site of PAN2 in the complex and may actually bind nucleosides of a poly(A) RNA rather than ATP, feeding the poly(A)-tail to the active site of the deadenylase and thus increasing the efficiency with which this distributive enzyme degrades oligo(A) RNAs.</text>
</comment>
<comment type="domain">
    <text evidence="1">The pseudokinase domain, the coiled-coil (CC), and C-terminal knob domain (CK) form a structural unit (PKC) that forms an extensive high-affinity interaction surface for PAN2.</text>
</comment>
<comment type="similarity">
    <text evidence="1">Belongs to the protein kinase superfamily. PAN3 family.</text>
</comment>
<accession>Q6CP23</accession>